<keyword id="KW-0963">Cytoplasm</keyword>
<keyword id="KW-0378">Hydrolase</keyword>
<keyword id="KW-0645">Protease</keyword>
<keyword id="KW-0720">Serine protease</keyword>
<proteinExistence type="inferred from homology"/>
<reference key="1">
    <citation type="journal article" date="2006" name="PLoS Genet.">
        <title>Comparative genomics of emerging human ehrlichiosis agents.</title>
        <authorList>
            <person name="Dunning Hotopp J.C."/>
            <person name="Lin M."/>
            <person name="Madupu R."/>
            <person name="Crabtree J."/>
            <person name="Angiuoli S.V."/>
            <person name="Eisen J.A."/>
            <person name="Seshadri R."/>
            <person name="Ren Q."/>
            <person name="Wu M."/>
            <person name="Utterback T.R."/>
            <person name="Smith S."/>
            <person name="Lewis M."/>
            <person name="Khouri H."/>
            <person name="Zhang C."/>
            <person name="Niu H."/>
            <person name="Lin Q."/>
            <person name="Ohashi N."/>
            <person name="Zhi N."/>
            <person name="Nelson W.C."/>
            <person name="Brinkac L.M."/>
            <person name="Dodson R.J."/>
            <person name="Rosovitz M.J."/>
            <person name="Sundaram J.P."/>
            <person name="Daugherty S.C."/>
            <person name="Davidsen T."/>
            <person name="Durkin A.S."/>
            <person name="Gwinn M.L."/>
            <person name="Haft D.H."/>
            <person name="Selengut J.D."/>
            <person name="Sullivan S.A."/>
            <person name="Zafar N."/>
            <person name="Zhou L."/>
            <person name="Benahmed F."/>
            <person name="Forberger H."/>
            <person name="Halpin R."/>
            <person name="Mulligan S."/>
            <person name="Robinson J."/>
            <person name="White O."/>
            <person name="Rikihisa Y."/>
            <person name="Tettelin H."/>
        </authorList>
    </citation>
    <scope>NUCLEOTIDE SEQUENCE [LARGE SCALE GENOMIC DNA]</scope>
    <source>
        <strain>ATCC VR-367 / Miyayama</strain>
    </source>
</reference>
<organism>
    <name type="scientific">Neorickettsia sennetsu (strain ATCC VR-367 / Miyayama)</name>
    <name type="common">Ehrlichia sennetsu</name>
    <dbReference type="NCBI Taxonomy" id="222891"/>
    <lineage>
        <taxon>Bacteria</taxon>
        <taxon>Pseudomonadati</taxon>
        <taxon>Pseudomonadota</taxon>
        <taxon>Alphaproteobacteria</taxon>
        <taxon>Rickettsiales</taxon>
        <taxon>Anaplasmataceae</taxon>
        <taxon>Neorickettsia</taxon>
    </lineage>
</organism>
<sequence length="201" mass="22231">MNLVPMVVDQTPRGERAYDIFSRLLKERVVFLTGPIEDGMASLIVAQLLFLEAENPDKDIFMYINSPGGVVTAGLSIYDTMQYIKPSVSTVCVGQAASAASLILASGAEGKRFALPHSRVMVHQPSGGVRGQATDMEIHVKEILQLKRMINEIYQKHTGETIKKIETLLERDTFLSPEEAKKVGIIDDIITQRKENSGKQE</sequence>
<evidence type="ECO:0000255" key="1">
    <source>
        <dbReference type="HAMAP-Rule" id="MF_00444"/>
    </source>
</evidence>
<dbReference type="EC" id="3.4.21.92" evidence="1"/>
<dbReference type="EMBL" id="CP000237">
    <property type="protein sequence ID" value="ABD45709.1"/>
    <property type="molecule type" value="Genomic_DNA"/>
</dbReference>
<dbReference type="RefSeq" id="WP_041917580.1">
    <property type="nucleotide sequence ID" value="NC_007798.1"/>
</dbReference>
<dbReference type="SMR" id="Q2GD19"/>
<dbReference type="STRING" id="222891.NSE_0752"/>
<dbReference type="MEROPS" id="S14.001"/>
<dbReference type="KEGG" id="nse:NSE_0752"/>
<dbReference type="eggNOG" id="COG0740">
    <property type="taxonomic scope" value="Bacteria"/>
</dbReference>
<dbReference type="HOGENOM" id="CLU_058707_3_2_5"/>
<dbReference type="OrthoDB" id="9802800at2"/>
<dbReference type="Proteomes" id="UP000001942">
    <property type="component" value="Chromosome"/>
</dbReference>
<dbReference type="GO" id="GO:0005737">
    <property type="term" value="C:cytoplasm"/>
    <property type="evidence" value="ECO:0007669"/>
    <property type="project" value="UniProtKB-SubCell"/>
</dbReference>
<dbReference type="GO" id="GO:0009368">
    <property type="term" value="C:endopeptidase Clp complex"/>
    <property type="evidence" value="ECO:0007669"/>
    <property type="project" value="TreeGrafter"/>
</dbReference>
<dbReference type="GO" id="GO:0004176">
    <property type="term" value="F:ATP-dependent peptidase activity"/>
    <property type="evidence" value="ECO:0007669"/>
    <property type="project" value="InterPro"/>
</dbReference>
<dbReference type="GO" id="GO:0051117">
    <property type="term" value="F:ATPase binding"/>
    <property type="evidence" value="ECO:0007669"/>
    <property type="project" value="TreeGrafter"/>
</dbReference>
<dbReference type="GO" id="GO:0004252">
    <property type="term" value="F:serine-type endopeptidase activity"/>
    <property type="evidence" value="ECO:0007669"/>
    <property type="project" value="UniProtKB-UniRule"/>
</dbReference>
<dbReference type="GO" id="GO:0006515">
    <property type="term" value="P:protein quality control for misfolded or incompletely synthesized proteins"/>
    <property type="evidence" value="ECO:0007669"/>
    <property type="project" value="TreeGrafter"/>
</dbReference>
<dbReference type="CDD" id="cd07017">
    <property type="entry name" value="S14_ClpP_2"/>
    <property type="match status" value="1"/>
</dbReference>
<dbReference type="FunFam" id="3.90.226.10:FF:000001">
    <property type="entry name" value="ATP-dependent Clp protease proteolytic subunit"/>
    <property type="match status" value="1"/>
</dbReference>
<dbReference type="Gene3D" id="3.90.226.10">
    <property type="entry name" value="2-enoyl-CoA Hydratase, Chain A, domain 1"/>
    <property type="match status" value="1"/>
</dbReference>
<dbReference type="HAMAP" id="MF_00444">
    <property type="entry name" value="ClpP"/>
    <property type="match status" value="1"/>
</dbReference>
<dbReference type="InterPro" id="IPR001907">
    <property type="entry name" value="ClpP"/>
</dbReference>
<dbReference type="InterPro" id="IPR029045">
    <property type="entry name" value="ClpP/crotonase-like_dom_sf"/>
</dbReference>
<dbReference type="InterPro" id="IPR023562">
    <property type="entry name" value="ClpP/TepA"/>
</dbReference>
<dbReference type="InterPro" id="IPR033135">
    <property type="entry name" value="ClpP_His_AS"/>
</dbReference>
<dbReference type="InterPro" id="IPR018215">
    <property type="entry name" value="ClpP_Ser_AS"/>
</dbReference>
<dbReference type="NCBIfam" id="NF001368">
    <property type="entry name" value="PRK00277.1"/>
    <property type="match status" value="1"/>
</dbReference>
<dbReference type="NCBIfam" id="NF009205">
    <property type="entry name" value="PRK12553.1"/>
    <property type="match status" value="1"/>
</dbReference>
<dbReference type="PANTHER" id="PTHR10381">
    <property type="entry name" value="ATP-DEPENDENT CLP PROTEASE PROTEOLYTIC SUBUNIT"/>
    <property type="match status" value="1"/>
</dbReference>
<dbReference type="PANTHER" id="PTHR10381:SF70">
    <property type="entry name" value="ATP-DEPENDENT CLP PROTEASE PROTEOLYTIC SUBUNIT"/>
    <property type="match status" value="1"/>
</dbReference>
<dbReference type="Pfam" id="PF00574">
    <property type="entry name" value="CLP_protease"/>
    <property type="match status" value="1"/>
</dbReference>
<dbReference type="PRINTS" id="PR00127">
    <property type="entry name" value="CLPPROTEASEP"/>
</dbReference>
<dbReference type="SUPFAM" id="SSF52096">
    <property type="entry name" value="ClpP/crotonase"/>
    <property type="match status" value="1"/>
</dbReference>
<dbReference type="PROSITE" id="PS00382">
    <property type="entry name" value="CLP_PROTEASE_HIS"/>
    <property type="match status" value="1"/>
</dbReference>
<dbReference type="PROSITE" id="PS00381">
    <property type="entry name" value="CLP_PROTEASE_SER"/>
    <property type="match status" value="1"/>
</dbReference>
<comment type="function">
    <text evidence="1">Cleaves peptides in various proteins in a process that requires ATP hydrolysis. Has a chymotrypsin-like activity. Plays a major role in the degradation of misfolded proteins.</text>
</comment>
<comment type="catalytic activity">
    <reaction evidence="1">
        <text>Hydrolysis of proteins to small peptides in the presence of ATP and magnesium. alpha-casein is the usual test substrate. In the absence of ATP, only oligopeptides shorter than five residues are hydrolyzed (such as succinyl-Leu-Tyr-|-NHMec, and Leu-Tyr-Leu-|-Tyr-Trp, in which cleavage of the -Tyr-|-Leu- and -Tyr-|-Trp bonds also occurs).</text>
        <dbReference type="EC" id="3.4.21.92"/>
    </reaction>
</comment>
<comment type="subunit">
    <text evidence="1">Fourteen ClpP subunits assemble into 2 heptameric rings which stack back to back to give a disk-like structure with a central cavity, resembling the structure of eukaryotic proteasomes.</text>
</comment>
<comment type="subcellular location">
    <subcellularLocation>
        <location evidence="1">Cytoplasm</location>
    </subcellularLocation>
</comment>
<comment type="similarity">
    <text evidence="1">Belongs to the peptidase S14 family.</text>
</comment>
<gene>
    <name evidence="1" type="primary">clpP</name>
    <name type="ordered locus">NSE_0752</name>
</gene>
<feature type="chain" id="PRO_0000236394" description="ATP-dependent Clp protease proteolytic subunit">
    <location>
        <begin position="1"/>
        <end position="201"/>
    </location>
</feature>
<feature type="active site" description="Nucleophile" evidence="1">
    <location>
        <position position="98"/>
    </location>
</feature>
<feature type="active site" evidence="1">
    <location>
        <position position="123"/>
    </location>
</feature>
<name>CLPP_NEOSM</name>
<accession>Q2GD19</accession>
<protein>
    <recommendedName>
        <fullName evidence="1">ATP-dependent Clp protease proteolytic subunit</fullName>
        <ecNumber evidence="1">3.4.21.92</ecNumber>
    </recommendedName>
    <alternativeName>
        <fullName evidence="1">Endopeptidase Clp</fullName>
    </alternativeName>
</protein>